<name>CSRA_PECCC</name>
<accession>P0DKY7</accession>
<accession>Q47620</accession>
<accession>Q9XB50</accession>
<comment type="function">
    <text evidence="2">Controls extracellular enzymes, N-(3-oxohexanoyl)-L-homoserine lactone, and pathogenicity. Repressor of virulence factors.</text>
</comment>
<comment type="function">
    <text evidence="1">A key translational regulator that binds mRNA to regulate translation initiation and/or mRNA stability. Mediates global changes in gene expression, shifting from rapid growth to stress survival by linking envelope stress, the stringent response and the catabolite repression systems. Usually binds in the 5'-UTR; binding at or near the Shine-Dalgarno sequence prevents ribosome-binding, repressing translation, binding elsewhere in the 5'-UTR can activate translation and/or stabilize the mRNA. Its function is antagonized by small RNA(s).</text>
</comment>
<comment type="subunit">
    <text evidence="1">Homodimer; the beta-strands of each monomer intercalate to form a hydrophobic core, while the alpha-helices form wings that extend away from the core.</text>
</comment>
<comment type="subcellular location">
    <subcellularLocation>
        <location evidence="1">Cytoplasm</location>
    </subcellularLocation>
</comment>
<comment type="similarity">
    <text evidence="1">Belongs to the CsrA/RsmA family.</text>
</comment>
<evidence type="ECO:0000255" key="1">
    <source>
        <dbReference type="HAMAP-Rule" id="MF_00167"/>
    </source>
</evidence>
<evidence type="ECO:0000269" key="2">
    <source>
    </source>
</evidence>
<evidence type="ECO:0000303" key="3">
    <source>
    </source>
</evidence>
<feature type="chain" id="PRO_0000177064" description="Translational regulator CsrA">
    <location>
        <begin position="1"/>
        <end position="61"/>
    </location>
</feature>
<protein>
    <recommendedName>
        <fullName evidence="1">Translational regulator CsrA</fullName>
    </recommendedName>
    <alternativeName>
        <fullName evidence="1">Carbon storage regulator</fullName>
    </alternativeName>
    <alternativeName>
        <fullName evidence="3">Repressor RsmA</fullName>
    </alternativeName>
</protein>
<reference key="1">
    <citation type="journal article" date="1995" name="J. Bacteriol.">
        <title>Identification of a global repressor gene, rsmA, of Erwinia carotovora subsp. carotovora that controls extracellular enzymes, N-(3-oxohexanoyl)-L-homoserine lactone, and pathogenicity in soft-rotting Erwinia spp.</title>
        <authorList>
            <person name="Cui Y."/>
            <person name="Chatterjee A."/>
            <person name="Liu Y."/>
            <person name="Dumenyo C.K."/>
            <person name="Chatterjee A.K."/>
        </authorList>
    </citation>
    <scope>NUCLEOTIDE SEQUENCE [GENOMIC DNA]</scope>
    <scope>FUNCTION</scope>
    <source>
        <strain>71</strain>
    </source>
</reference>
<proteinExistence type="inferred from homology"/>
<gene>
    <name evidence="1" type="primary">csrA</name>
    <name evidence="3" type="synonym">rsmA</name>
</gene>
<sequence>MLILTRRVGETLIIGDEVTVTVLGVKGNQVRIGVNAPKEVSVHREEIYQRIQAEKSQPTSY</sequence>
<dbReference type="EMBL" id="L40173">
    <property type="protein sequence ID" value="AAA74502.1"/>
    <property type="molecule type" value="Genomic_DNA"/>
</dbReference>
<dbReference type="SMR" id="P0DKY7"/>
<dbReference type="PHI-base" id="PHI:4576"/>
<dbReference type="GO" id="GO:0005829">
    <property type="term" value="C:cytosol"/>
    <property type="evidence" value="ECO:0007669"/>
    <property type="project" value="TreeGrafter"/>
</dbReference>
<dbReference type="GO" id="GO:0048027">
    <property type="term" value="F:mRNA 5'-UTR binding"/>
    <property type="evidence" value="ECO:0007669"/>
    <property type="project" value="UniProtKB-UniRule"/>
</dbReference>
<dbReference type="GO" id="GO:0006402">
    <property type="term" value="P:mRNA catabolic process"/>
    <property type="evidence" value="ECO:0007669"/>
    <property type="project" value="InterPro"/>
</dbReference>
<dbReference type="GO" id="GO:0045947">
    <property type="term" value="P:negative regulation of translational initiation"/>
    <property type="evidence" value="ECO:0007669"/>
    <property type="project" value="UniProtKB-UniRule"/>
</dbReference>
<dbReference type="GO" id="GO:0045948">
    <property type="term" value="P:positive regulation of translational initiation"/>
    <property type="evidence" value="ECO:0007669"/>
    <property type="project" value="UniProtKB-UniRule"/>
</dbReference>
<dbReference type="GO" id="GO:0006109">
    <property type="term" value="P:regulation of carbohydrate metabolic process"/>
    <property type="evidence" value="ECO:0007669"/>
    <property type="project" value="UniProtKB-UniRule"/>
</dbReference>
<dbReference type="FunFam" id="2.60.40.4380:FF:000001">
    <property type="entry name" value="Translational regulator CsrA"/>
    <property type="match status" value="1"/>
</dbReference>
<dbReference type="Gene3D" id="2.60.40.4380">
    <property type="entry name" value="Translational regulator CsrA"/>
    <property type="match status" value="1"/>
</dbReference>
<dbReference type="HAMAP" id="MF_00167">
    <property type="entry name" value="CsrA"/>
    <property type="match status" value="1"/>
</dbReference>
<dbReference type="InterPro" id="IPR003751">
    <property type="entry name" value="CsrA"/>
</dbReference>
<dbReference type="InterPro" id="IPR036107">
    <property type="entry name" value="CsrA_sf"/>
</dbReference>
<dbReference type="NCBIfam" id="TIGR00202">
    <property type="entry name" value="csrA"/>
    <property type="match status" value="1"/>
</dbReference>
<dbReference type="NCBIfam" id="NF002469">
    <property type="entry name" value="PRK01712.1"/>
    <property type="match status" value="1"/>
</dbReference>
<dbReference type="PANTHER" id="PTHR34984">
    <property type="entry name" value="CARBON STORAGE REGULATOR"/>
    <property type="match status" value="1"/>
</dbReference>
<dbReference type="PANTHER" id="PTHR34984:SF1">
    <property type="entry name" value="CARBON STORAGE REGULATOR"/>
    <property type="match status" value="1"/>
</dbReference>
<dbReference type="Pfam" id="PF02599">
    <property type="entry name" value="CsrA"/>
    <property type="match status" value="1"/>
</dbReference>
<dbReference type="SUPFAM" id="SSF117130">
    <property type="entry name" value="CsrA-like"/>
    <property type="match status" value="1"/>
</dbReference>
<keyword id="KW-0010">Activator</keyword>
<keyword id="KW-0963">Cytoplasm</keyword>
<keyword id="KW-0678">Repressor</keyword>
<keyword id="KW-0694">RNA-binding</keyword>
<keyword id="KW-0810">Translation regulation</keyword>
<organism>
    <name type="scientific">Pectobacterium carotovorum subsp. carotovorum</name>
    <name type="common">Erwinia carotovora subsp. carotovora</name>
    <dbReference type="NCBI Taxonomy" id="555"/>
    <lineage>
        <taxon>Bacteria</taxon>
        <taxon>Pseudomonadati</taxon>
        <taxon>Pseudomonadota</taxon>
        <taxon>Gammaproteobacteria</taxon>
        <taxon>Enterobacterales</taxon>
        <taxon>Pectobacteriaceae</taxon>
        <taxon>Pectobacterium</taxon>
    </lineage>
</organism>